<dbReference type="EMBL" id="AF303741">
    <property type="protein sequence ID" value="AAK82122.1"/>
    <property type="molecule type" value="Genomic_DNA"/>
</dbReference>
<dbReference type="RefSeq" id="NP_149724.1">
    <property type="nucleotide sequence ID" value="NC_003038.1"/>
</dbReference>
<dbReference type="KEGG" id="vg:1733062"/>
<dbReference type="Proteomes" id="UP000001359">
    <property type="component" value="Genome"/>
</dbReference>
<dbReference type="InterPro" id="IPR045571">
    <property type="entry name" value="DUF5907"/>
</dbReference>
<dbReference type="Pfam" id="PF19264">
    <property type="entry name" value="DUF5907"/>
    <property type="match status" value="17"/>
</dbReference>
<protein>
    <recommendedName>
        <fullName>Uncharacterized protein 261R</fullName>
    </recommendedName>
</protein>
<organism>
    <name type="scientific">Invertebrate iridescent virus 6</name>
    <name type="common">IIV-6</name>
    <name type="synonym">Chilo iridescent virus</name>
    <dbReference type="NCBI Taxonomy" id="176652"/>
    <lineage>
        <taxon>Viruses</taxon>
        <taxon>Varidnaviria</taxon>
        <taxon>Bamfordvirae</taxon>
        <taxon>Nucleocytoviricota</taxon>
        <taxon>Megaviricetes</taxon>
        <taxon>Pimascovirales</taxon>
        <taxon>Iridoviridae</taxon>
        <taxon>Betairidovirinae</taxon>
        <taxon>Iridovirus</taxon>
    </lineage>
</organism>
<name>261R_IIV6</name>
<keyword id="KW-1185">Reference proteome</keyword>
<comment type="similarity">
    <text evidence="1">Belongs to the IIV-6 261R/396L/443R family.</text>
</comment>
<accession>Q8QZQ8</accession>
<sequence>MASFNIENPLQQLEQSGLAGVTLNDNAAPAANVIYSSLKSGGGGSTPPATTTSLGTIQLAGVLTGIATSPQLAAGSVGASQLAPGAVNASSIAPGSITGSSLAPGTITSTQLAPGSVGSSQIANGAVGSSQIANGAVGSSQIANGAVGASQIANGAIGPMQLAPLSGPSELIGSNSTSPNAMDITLGPSLQMSPAGVLSVNPSAVTVAPSTTTSLGTIQLAGVLTGTATSPQLAAGSVGASQLAPGAVTSSSIAPGSISGSSLAPGSVTSSQLAAGSVGTSQLAPLPAPSELLGSSSTSSAVTDIMLGSGLSMTGSVLSVNASTAVPPATSSSLGTVQLAGALTGSATAPSLAANSVGSSQISAGAVGATQLGANVVGNGQLAPLSGPSELIGSNSSSPAASNITLGTGLSMSSGGVLSVNASTAVPAATSSSLGTIQLAGALSGTATSPTLSAGSVGATQIVAGSVGATQLGANVVGNSQLAALSGPSELIGSASGSSDATNIILGSGLTMTGNTLNSTLGTIPIPVSQGGTGLTTIPSGSFLLGNGTSPVTTASSIPATMVTPNLVGSVNGVVPSSAGGNVAVVLGNVTTGVLSAQPAQPQPNGNIYVVSGDPTPANNGRTFISNGTTWNEVTNNIATTDARYVQLAGSTMNANANLVFPSTGHVTLNQTTFASTDAVTAQYVASQIASGSTPAATTTSLGTIQLAGSLTGTATSPSIASGVVTQTNMASNSIGSAQIIAGSVGATQLGANVVGTGQLAPLSANSELLGSNSSSPAATNITLGSGLSMTGSVLSVNASTAVPAATSSSLGTIQLAGALTGSATSPTLATGSVGATQIVAGSVGATQLGANVVGNGQLAPLSAPSELIGSNSASPNATNISLGSGLSMSSGGVLSVDASTAVPAATSSSLGTIQLSGALSGSATSPTLSAGSVGSTQIADGAVGASKIANGAVGATQIAANSVGTGQLAALSGTSQLIGSNSSSSAATNITLGTGLSMSSGGVLSATAIAPAPATSTSLGTIQLAGSLSGTATAPTIANNAIGTAQLANNAVETAQLANGAVGLSQLAPLPATSELIGSSSGSTTASAITLGSGLVMSAGGQLSVNLTGVSIPAATSSSLGGIQMLGDLTGSVATAPTVAPGAITLAKMANLSGNSQLIGSSKTSTTPTNITLGPSMSMTNSQLNGPISFLTSGNNPNTTAPSDRPAQQNTLYSGTDGSIWLYNGTNYVKINSGLTSTGSIVASLTNITFGNLVVQVGGIVNNANCSIFVMFNDSQTHQCTASLFSTYAANGSAQNIGNMYQPISGTFVGLQKVWGGGFLSQVGGMQTYVLIDQTFGKQWNISISAIASNSFFVSVLSVI</sequence>
<feature type="chain" id="PRO_0000377837" description="Uncharacterized protein 261R">
    <location>
        <begin position="1"/>
        <end position="1361"/>
    </location>
</feature>
<evidence type="ECO:0000305" key="1"/>
<reference key="1">
    <citation type="journal article" date="2001" name="Virology">
        <title>Analysis of the first complete DNA sequence of an invertebrate iridovirus: coding strategy of the genome of Chilo iridescent virus.</title>
        <authorList>
            <person name="Jakob N.J."/>
            <person name="Mueller K."/>
            <person name="Bahr U."/>
            <person name="Darai G."/>
        </authorList>
    </citation>
    <scope>NUCLEOTIDE SEQUENCE [LARGE SCALE GENOMIC DNA]</scope>
</reference>
<reference key="2">
    <citation type="journal article" date="2007" name="Virol. J.">
        <title>Comparative genomic analysis of the family Iridoviridae: re-annotating and defining the core set of iridovirus genes.</title>
        <authorList>
            <person name="Eaton H.E."/>
            <person name="Metcalf J."/>
            <person name="Penny E."/>
            <person name="Tcherepanov V."/>
            <person name="Upton C."/>
            <person name="Brunetti C.R."/>
        </authorList>
    </citation>
    <scope>GENOME REANNOTATION</scope>
</reference>
<organismHost>
    <name type="scientific">Acheta domesticus</name>
    <name type="common">House cricket</name>
    <dbReference type="NCBI Taxonomy" id="6997"/>
</organismHost>
<organismHost>
    <name type="scientific">Chilo suppressalis</name>
    <name type="common">Asiatic rice borer moth</name>
    <dbReference type="NCBI Taxonomy" id="168631"/>
</organismHost>
<organismHost>
    <name type="scientific">Gryllus bimaculatus</name>
    <name type="common">Two-spotted cricket</name>
    <dbReference type="NCBI Taxonomy" id="6999"/>
</organismHost>
<organismHost>
    <name type="scientific">Gryllus campestris</name>
    <dbReference type="NCBI Taxonomy" id="58607"/>
</organismHost>
<organismHost>
    <name type="scientific">Spodoptera frugiperda</name>
    <name type="common">Fall armyworm</name>
    <dbReference type="NCBI Taxonomy" id="7108"/>
</organismHost>
<proteinExistence type="inferred from homology"/>
<gene>
    <name type="ORF">IIV6-261R</name>
</gene>